<reference key="1">
    <citation type="journal article" date="2006" name="Proc. Natl. Acad. Sci. U.S.A.">
        <title>The complete genome of Rhodococcus sp. RHA1 provides insights into a catabolic powerhouse.</title>
        <authorList>
            <person name="McLeod M.P."/>
            <person name="Warren R.L."/>
            <person name="Hsiao W.W.L."/>
            <person name="Araki N."/>
            <person name="Myhre M."/>
            <person name="Fernandes C."/>
            <person name="Miyazawa D."/>
            <person name="Wong W."/>
            <person name="Lillquist A.L."/>
            <person name="Wang D."/>
            <person name="Dosanjh M."/>
            <person name="Hara H."/>
            <person name="Petrescu A."/>
            <person name="Morin R.D."/>
            <person name="Yang G."/>
            <person name="Stott J.M."/>
            <person name="Schein J.E."/>
            <person name="Shin H."/>
            <person name="Smailus D."/>
            <person name="Siddiqui A.S."/>
            <person name="Marra M.A."/>
            <person name="Jones S.J.M."/>
            <person name="Holt R."/>
            <person name="Brinkman F.S.L."/>
            <person name="Miyauchi K."/>
            <person name="Fukuda M."/>
            <person name="Davies J.E."/>
            <person name="Mohn W.W."/>
            <person name="Eltis L.D."/>
        </authorList>
    </citation>
    <scope>NUCLEOTIDE SEQUENCE [LARGE SCALE GENOMIC DNA]</scope>
    <source>
        <strain>RHA1</strain>
    </source>
</reference>
<protein>
    <recommendedName>
        <fullName evidence="1">2-C-methyl-D-erythritol 2,4-cyclodiphosphate synthase</fullName>
        <shortName evidence="1">MECDP-synthase</shortName>
        <shortName evidence="1">MECPP-synthase</shortName>
        <shortName evidence="1">MECPS</shortName>
        <ecNumber evidence="1">4.6.1.12</ecNumber>
    </recommendedName>
</protein>
<evidence type="ECO:0000255" key="1">
    <source>
        <dbReference type="HAMAP-Rule" id="MF_00107"/>
    </source>
</evidence>
<accession>Q0S889</accession>
<comment type="function">
    <text evidence="1">Involved in the biosynthesis of isopentenyl diphosphate (IPP) and dimethylallyl diphosphate (DMAPP), two major building blocks of isoprenoid compounds. Catalyzes the conversion of 4-diphosphocytidyl-2-C-methyl-D-erythritol 2-phosphate (CDP-ME2P) to 2-C-methyl-D-erythritol 2,4-cyclodiphosphate (ME-CPP) with a corresponding release of cytidine 5-monophosphate (CMP).</text>
</comment>
<comment type="catalytic activity">
    <reaction evidence="1">
        <text>4-CDP-2-C-methyl-D-erythritol 2-phosphate = 2-C-methyl-D-erythritol 2,4-cyclic diphosphate + CMP</text>
        <dbReference type="Rhea" id="RHEA:23864"/>
        <dbReference type="ChEBI" id="CHEBI:57919"/>
        <dbReference type="ChEBI" id="CHEBI:58483"/>
        <dbReference type="ChEBI" id="CHEBI:60377"/>
        <dbReference type="EC" id="4.6.1.12"/>
    </reaction>
</comment>
<comment type="cofactor">
    <cofactor evidence="1">
        <name>a divalent metal cation</name>
        <dbReference type="ChEBI" id="CHEBI:60240"/>
    </cofactor>
    <text evidence="1">Binds 1 divalent metal cation per subunit.</text>
</comment>
<comment type="pathway">
    <text evidence="1">Isoprenoid biosynthesis; isopentenyl diphosphate biosynthesis via DXP pathway; isopentenyl diphosphate from 1-deoxy-D-xylulose 5-phosphate: step 4/6.</text>
</comment>
<comment type="subunit">
    <text evidence="1">Homotrimer.</text>
</comment>
<comment type="similarity">
    <text evidence="1">Belongs to the IspF family.</text>
</comment>
<dbReference type="EC" id="4.6.1.12" evidence="1"/>
<dbReference type="EMBL" id="CP000431">
    <property type="protein sequence ID" value="ABG96247.1"/>
    <property type="molecule type" value="Genomic_DNA"/>
</dbReference>
<dbReference type="RefSeq" id="WP_009477526.1">
    <property type="nucleotide sequence ID" value="NC_008268.1"/>
</dbReference>
<dbReference type="SMR" id="Q0S889"/>
<dbReference type="KEGG" id="rha:RHA1_ro04461"/>
<dbReference type="eggNOG" id="COG0245">
    <property type="taxonomic scope" value="Bacteria"/>
</dbReference>
<dbReference type="HOGENOM" id="CLU_084630_1_0_11"/>
<dbReference type="OrthoDB" id="9804336at2"/>
<dbReference type="UniPathway" id="UPA00056">
    <property type="reaction ID" value="UER00095"/>
</dbReference>
<dbReference type="Proteomes" id="UP000008710">
    <property type="component" value="Chromosome"/>
</dbReference>
<dbReference type="GO" id="GO:0008685">
    <property type="term" value="F:2-C-methyl-D-erythritol 2,4-cyclodiphosphate synthase activity"/>
    <property type="evidence" value="ECO:0007669"/>
    <property type="project" value="UniProtKB-UniRule"/>
</dbReference>
<dbReference type="GO" id="GO:0046872">
    <property type="term" value="F:metal ion binding"/>
    <property type="evidence" value="ECO:0007669"/>
    <property type="project" value="UniProtKB-KW"/>
</dbReference>
<dbReference type="GO" id="GO:0019288">
    <property type="term" value="P:isopentenyl diphosphate biosynthetic process, methylerythritol 4-phosphate pathway"/>
    <property type="evidence" value="ECO:0007669"/>
    <property type="project" value="UniProtKB-UniRule"/>
</dbReference>
<dbReference type="GO" id="GO:0016114">
    <property type="term" value="P:terpenoid biosynthetic process"/>
    <property type="evidence" value="ECO:0007669"/>
    <property type="project" value="InterPro"/>
</dbReference>
<dbReference type="CDD" id="cd00554">
    <property type="entry name" value="MECDP_synthase"/>
    <property type="match status" value="1"/>
</dbReference>
<dbReference type="FunFam" id="3.30.1330.50:FF:000003">
    <property type="entry name" value="2-C-methyl-D-erythritol 2,4-cyclodiphosphate synthase"/>
    <property type="match status" value="1"/>
</dbReference>
<dbReference type="Gene3D" id="3.30.1330.50">
    <property type="entry name" value="2-C-methyl-D-erythritol 2,4-cyclodiphosphate synthase"/>
    <property type="match status" value="1"/>
</dbReference>
<dbReference type="HAMAP" id="MF_00107">
    <property type="entry name" value="IspF"/>
    <property type="match status" value="1"/>
</dbReference>
<dbReference type="InterPro" id="IPR003526">
    <property type="entry name" value="MECDP_synthase"/>
</dbReference>
<dbReference type="InterPro" id="IPR020555">
    <property type="entry name" value="MECDP_synthase_CS"/>
</dbReference>
<dbReference type="InterPro" id="IPR036571">
    <property type="entry name" value="MECDP_synthase_sf"/>
</dbReference>
<dbReference type="NCBIfam" id="TIGR00151">
    <property type="entry name" value="ispF"/>
    <property type="match status" value="1"/>
</dbReference>
<dbReference type="PANTHER" id="PTHR43181">
    <property type="entry name" value="2-C-METHYL-D-ERYTHRITOL 2,4-CYCLODIPHOSPHATE SYNTHASE, CHLOROPLASTIC"/>
    <property type="match status" value="1"/>
</dbReference>
<dbReference type="PANTHER" id="PTHR43181:SF1">
    <property type="entry name" value="2-C-METHYL-D-ERYTHRITOL 2,4-CYCLODIPHOSPHATE SYNTHASE, CHLOROPLASTIC"/>
    <property type="match status" value="1"/>
</dbReference>
<dbReference type="Pfam" id="PF02542">
    <property type="entry name" value="YgbB"/>
    <property type="match status" value="1"/>
</dbReference>
<dbReference type="SUPFAM" id="SSF69765">
    <property type="entry name" value="IpsF-like"/>
    <property type="match status" value="1"/>
</dbReference>
<dbReference type="PROSITE" id="PS01350">
    <property type="entry name" value="ISPF"/>
    <property type="match status" value="1"/>
</dbReference>
<gene>
    <name evidence="1" type="primary">ispF</name>
    <name type="ordered locus">RHA1_ro04461</name>
</gene>
<feature type="chain" id="PRO_1000022871" description="2-C-methyl-D-erythritol 2,4-cyclodiphosphate synthase">
    <location>
        <begin position="1"/>
        <end position="158"/>
    </location>
</feature>
<feature type="binding site" evidence="1">
    <location>
        <begin position="8"/>
        <end position="10"/>
    </location>
    <ligand>
        <name>4-CDP-2-C-methyl-D-erythritol 2-phosphate</name>
        <dbReference type="ChEBI" id="CHEBI:57919"/>
    </ligand>
</feature>
<feature type="binding site" evidence="1">
    <location>
        <position position="8"/>
    </location>
    <ligand>
        <name>a divalent metal cation</name>
        <dbReference type="ChEBI" id="CHEBI:60240"/>
    </ligand>
</feature>
<feature type="binding site" evidence="1">
    <location>
        <position position="10"/>
    </location>
    <ligand>
        <name>a divalent metal cation</name>
        <dbReference type="ChEBI" id="CHEBI:60240"/>
    </ligand>
</feature>
<feature type="binding site" evidence="1">
    <location>
        <begin position="34"/>
        <end position="35"/>
    </location>
    <ligand>
        <name>4-CDP-2-C-methyl-D-erythritol 2-phosphate</name>
        <dbReference type="ChEBI" id="CHEBI:57919"/>
    </ligand>
</feature>
<feature type="binding site" evidence="1">
    <location>
        <position position="42"/>
    </location>
    <ligand>
        <name>a divalent metal cation</name>
        <dbReference type="ChEBI" id="CHEBI:60240"/>
    </ligand>
</feature>
<feature type="binding site" evidence="1">
    <location>
        <begin position="56"/>
        <end position="58"/>
    </location>
    <ligand>
        <name>4-CDP-2-C-methyl-D-erythritol 2-phosphate</name>
        <dbReference type="ChEBI" id="CHEBI:57919"/>
    </ligand>
</feature>
<feature type="binding site" evidence="1">
    <location>
        <begin position="129"/>
        <end position="132"/>
    </location>
    <ligand>
        <name>4-CDP-2-C-methyl-D-erythritol 2-phosphate</name>
        <dbReference type="ChEBI" id="CHEBI:57919"/>
    </ligand>
</feature>
<feature type="binding site" evidence="1">
    <location>
        <position position="139"/>
    </location>
    <ligand>
        <name>4-CDP-2-C-methyl-D-erythritol 2-phosphate</name>
        <dbReference type="ChEBI" id="CHEBI:57919"/>
    </ligand>
</feature>
<feature type="site" description="Transition state stabilizer" evidence="1">
    <location>
        <position position="34"/>
    </location>
</feature>
<feature type="site" description="Transition state stabilizer" evidence="1">
    <location>
        <position position="130"/>
    </location>
</feature>
<keyword id="KW-0414">Isoprene biosynthesis</keyword>
<keyword id="KW-0456">Lyase</keyword>
<keyword id="KW-0479">Metal-binding</keyword>
<organism>
    <name type="scientific">Rhodococcus jostii (strain RHA1)</name>
    <dbReference type="NCBI Taxonomy" id="101510"/>
    <lineage>
        <taxon>Bacteria</taxon>
        <taxon>Bacillati</taxon>
        <taxon>Actinomycetota</taxon>
        <taxon>Actinomycetes</taxon>
        <taxon>Mycobacteriales</taxon>
        <taxon>Nocardiaceae</taxon>
        <taxon>Rhodococcus</taxon>
    </lineage>
</organism>
<name>ISPF_RHOJR</name>
<proteinExistence type="inferred from homology"/>
<sequence>MRVGIGTDVHPIEQGRPCWMAGLLFEDENGCAGHSDGDVAVHALCDALLSAAGLGDLGSVFGTGRPEWSGVSGAAMLAEVRRLLEEDDFDVANAAVQVIGNRPKIGPRRNEAQKVLSDILGAPVSVSATTTDGLGLTGRGEGIAAMATALVIPGRSAR</sequence>